<organism>
    <name type="scientific">Caenorhabditis briggsae</name>
    <dbReference type="NCBI Taxonomy" id="6238"/>
    <lineage>
        <taxon>Eukaryota</taxon>
        <taxon>Metazoa</taxon>
        <taxon>Ecdysozoa</taxon>
        <taxon>Nematoda</taxon>
        <taxon>Chromadorea</taxon>
        <taxon>Rhabditida</taxon>
        <taxon>Rhabditina</taxon>
        <taxon>Rhabditomorpha</taxon>
        <taxon>Rhabditoidea</taxon>
        <taxon>Rhabditidae</taxon>
        <taxon>Peloderinae</taxon>
        <taxon>Caenorhabditis</taxon>
    </lineage>
</organism>
<dbReference type="EC" id="3.4.21.53" evidence="1"/>
<dbReference type="EMBL" id="HE600964">
    <property type="protein sequence ID" value="CAP39411.2"/>
    <property type="molecule type" value="Genomic_DNA"/>
</dbReference>
<dbReference type="SMR" id="A8Y3E2"/>
<dbReference type="FunCoup" id="A8Y3E2">
    <property type="interactions" value="729"/>
</dbReference>
<dbReference type="STRING" id="6238.A8Y3E2"/>
<dbReference type="WormBase" id="CBG23035">
    <property type="protein sequence ID" value="CBP45854"/>
    <property type="gene ID" value="WBGene00041464"/>
    <property type="gene designation" value="Cbr-lonp-2"/>
</dbReference>
<dbReference type="eggNOG" id="KOG2004">
    <property type="taxonomic scope" value="Eukaryota"/>
</dbReference>
<dbReference type="HOGENOM" id="CLU_004109_4_3_1"/>
<dbReference type="InParanoid" id="A8Y3E2"/>
<dbReference type="OMA" id="EYFLHQQ"/>
<dbReference type="Proteomes" id="UP000008549">
    <property type="component" value="Unassembled WGS sequence"/>
</dbReference>
<dbReference type="GO" id="GO:0005782">
    <property type="term" value="C:peroxisomal matrix"/>
    <property type="evidence" value="ECO:0000318"/>
    <property type="project" value="GO_Central"/>
</dbReference>
<dbReference type="GO" id="GO:0005524">
    <property type="term" value="F:ATP binding"/>
    <property type="evidence" value="ECO:0007669"/>
    <property type="project" value="UniProtKB-UniRule"/>
</dbReference>
<dbReference type="GO" id="GO:0016887">
    <property type="term" value="F:ATP hydrolysis activity"/>
    <property type="evidence" value="ECO:0007669"/>
    <property type="project" value="UniProtKB-UniRule"/>
</dbReference>
<dbReference type="GO" id="GO:0004176">
    <property type="term" value="F:ATP-dependent peptidase activity"/>
    <property type="evidence" value="ECO:0007669"/>
    <property type="project" value="UniProtKB-UniRule"/>
</dbReference>
<dbReference type="GO" id="GO:0004252">
    <property type="term" value="F:serine-type endopeptidase activity"/>
    <property type="evidence" value="ECO:0007669"/>
    <property type="project" value="UniProtKB-UniRule"/>
</dbReference>
<dbReference type="GO" id="GO:0016558">
    <property type="term" value="P:protein import into peroxisome matrix"/>
    <property type="evidence" value="ECO:0007669"/>
    <property type="project" value="UniProtKB-UniRule"/>
</dbReference>
<dbReference type="GO" id="GO:0016485">
    <property type="term" value="P:protein processing"/>
    <property type="evidence" value="ECO:0000318"/>
    <property type="project" value="GO_Central"/>
</dbReference>
<dbReference type="GO" id="GO:0006515">
    <property type="term" value="P:protein quality control for misfolded or incompletely synthesized proteins"/>
    <property type="evidence" value="ECO:0007669"/>
    <property type="project" value="UniProtKB-UniRule"/>
</dbReference>
<dbReference type="GO" id="GO:0006625">
    <property type="term" value="P:protein targeting to peroxisome"/>
    <property type="evidence" value="ECO:0000318"/>
    <property type="project" value="GO_Central"/>
</dbReference>
<dbReference type="CDD" id="cd19500">
    <property type="entry name" value="RecA-like_Lon"/>
    <property type="match status" value="1"/>
</dbReference>
<dbReference type="FunFam" id="3.40.50.300:FF:000021">
    <property type="entry name" value="Lon protease homolog"/>
    <property type="match status" value="1"/>
</dbReference>
<dbReference type="FunFam" id="1.10.8.60:FF:000091">
    <property type="entry name" value="Lon protease homolog 2, peroxisomal"/>
    <property type="match status" value="1"/>
</dbReference>
<dbReference type="FunFam" id="3.30.230.10:FF:000118">
    <property type="entry name" value="Lon protease homolog 2, peroxisomal"/>
    <property type="match status" value="1"/>
</dbReference>
<dbReference type="Gene3D" id="1.10.8.60">
    <property type="match status" value="1"/>
</dbReference>
<dbReference type="Gene3D" id="1.20.5.5270">
    <property type="match status" value="1"/>
</dbReference>
<dbReference type="Gene3D" id="3.30.230.10">
    <property type="match status" value="1"/>
</dbReference>
<dbReference type="Gene3D" id="2.30.130.40">
    <property type="entry name" value="LON domain-like"/>
    <property type="match status" value="1"/>
</dbReference>
<dbReference type="Gene3D" id="3.40.50.300">
    <property type="entry name" value="P-loop containing nucleotide triphosphate hydrolases"/>
    <property type="match status" value="1"/>
</dbReference>
<dbReference type="HAMAP" id="MF_03121">
    <property type="entry name" value="lonp2_euk"/>
    <property type="match status" value="1"/>
</dbReference>
<dbReference type="InterPro" id="IPR003593">
    <property type="entry name" value="AAA+_ATPase"/>
</dbReference>
<dbReference type="InterPro" id="IPR003959">
    <property type="entry name" value="ATPase_AAA_core"/>
</dbReference>
<dbReference type="InterPro" id="IPR004815">
    <property type="entry name" value="Lon_bac/euk-typ"/>
</dbReference>
<dbReference type="InterPro" id="IPR054594">
    <property type="entry name" value="Lon_lid"/>
</dbReference>
<dbReference type="InterPro" id="IPR008269">
    <property type="entry name" value="Lon_proteolytic"/>
</dbReference>
<dbReference type="InterPro" id="IPR027065">
    <property type="entry name" value="Lon_Prtase"/>
</dbReference>
<dbReference type="InterPro" id="IPR003111">
    <property type="entry name" value="Lon_prtase_N"/>
</dbReference>
<dbReference type="InterPro" id="IPR046336">
    <property type="entry name" value="Lon_prtase_N_sf"/>
</dbReference>
<dbReference type="InterPro" id="IPR027501">
    <property type="entry name" value="Lonp2_euk"/>
</dbReference>
<dbReference type="InterPro" id="IPR027417">
    <property type="entry name" value="P-loop_NTPase"/>
</dbReference>
<dbReference type="InterPro" id="IPR015947">
    <property type="entry name" value="PUA-like_sf"/>
</dbReference>
<dbReference type="InterPro" id="IPR020568">
    <property type="entry name" value="Ribosomal_Su5_D2-typ_SF"/>
</dbReference>
<dbReference type="InterPro" id="IPR014721">
    <property type="entry name" value="Ribsml_uS5_D2-typ_fold_subgr"/>
</dbReference>
<dbReference type="NCBIfam" id="TIGR00763">
    <property type="entry name" value="lon"/>
    <property type="match status" value="1"/>
</dbReference>
<dbReference type="PANTHER" id="PTHR10046">
    <property type="entry name" value="ATP DEPENDENT LON PROTEASE FAMILY MEMBER"/>
    <property type="match status" value="1"/>
</dbReference>
<dbReference type="Pfam" id="PF00004">
    <property type="entry name" value="AAA"/>
    <property type="match status" value="1"/>
</dbReference>
<dbReference type="Pfam" id="PF05362">
    <property type="entry name" value="Lon_C"/>
    <property type="match status" value="1"/>
</dbReference>
<dbReference type="Pfam" id="PF22667">
    <property type="entry name" value="Lon_lid"/>
    <property type="match status" value="1"/>
</dbReference>
<dbReference type="Pfam" id="PF02190">
    <property type="entry name" value="LON_substr_bdg"/>
    <property type="match status" value="1"/>
</dbReference>
<dbReference type="PIRSF" id="PIRSF001174">
    <property type="entry name" value="Lon_proteas"/>
    <property type="match status" value="1"/>
</dbReference>
<dbReference type="PRINTS" id="PR00830">
    <property type="entry name" value="ENDOLAPTASE"/>
</dbReference>
<dbReference type="SMART" id="SM00382">
    <property type="entry name" value="AAA"/>
    <property type="match status" value="1"/>
</dbReference>
<dbReference type="SMART" id="SM00464">
    <property type="entry name" value="LON"/>
    <property type="match status" value="1"/>
</dbReference>
<dbReference type="SUPFAM" id="SSF52540">
    <property type="entry name" value="P-loop containing nucleoside triphosphate hydrolases"/>
    <property type="match status" value="1"/>
</dbReference>
<dbReference type="SUPFAM" id="SSF88697">
    <property type="entry name" value="PUA domain-like"/>
    <property type="match status" value="1"/>
</dbReference>
<dbReference type="SUPFAM" id="SSF54211">
    <property type="entry name" value="Ribosomal protein S5 domain 2-like"/>
    <property type="match status" value="1"/>
</dbReference>
<dbReference type="PROSITE" id="PS51787">
    <property type="entry name" value="LON_N"/>
    <property type="match status" value="1"/>
</dbReference>
<dbReference type="PROSITE" id="PS51786">
    <property type="entry name" value="LON_PROTEOLYTIC"/>
    <property type="match status" value="1"/>
</dbReference>
<sequence>MKFEESMELPVIVVDSGVLLPGASLKIPIRSKLNTRTIEQHLTRGGSNYVVIAYKLSTDKIYNVATIAYIEKLFGWTFNSTTNYSLDVIGLHRANIDKLSFPKCRVSKLEDSSERAEFNHSTIENVISGAKILAQNSESLKFSQEIHNSIDDHDYGKLADLCVSQIKNLEFSQFLDFLGTKNVEKRLEMCEKWMQMQRETKALQLKMAVPGNSEIPKKINKQRIPNSKNQVEQLEEKLSAIEFSEEVSDRVFSELHRLKNMNPQQSEYTVLMNWLELVSNLPWNTSTVDDIEINKARKILEDSHESMDDVKQRVLEHLAVCKINNSVKGMILCFTGPPGIGKTSIAKAIAESMGRKFQRVSLGGIRDESDIRGHRRTYVAAMPGRIIEALKHCKSNNPVFLLDEVDKLYSGNQGSPSAALLELLDPEQNSTFHDHYLNIPFDVSKIMFIATANDVERLEPALKDRLEIIEMSGYSMKEKVKICENHLVNRQLSKHCISPDYVNLDRHAIMAMIEEFTMEAGVRQLERNVGAVCRHVALRLAEALNSDPSADVLPDMDLPIQIGEPDIHKILKAKHMKRVKIVEKMRPLPPGVCFGLSVTTNGGRVMPIEASKCKGTGKIVTTGHLGKVLEESILVAKGWLGANAEKLGLKTLEENDIHVHLPAGAVNKDGPSAGTGLACALVSLAMGVPLRSDAAVTGEISLTGHVLAIGGVKEKVLAAQREGLRRVVLPKSNEEEYLKIDEDIRNEMDVVLADTVEDVIEAMMEKEPVLAKL</sequence>
<proteinExistence type="inferred from homology"/>
<reference key="1">
    <citation type="journal article" date="2003" name="PLoS Biol.">
        <title>The genome sequence of Caenorhabditis briggsae: a platform for comparative genomics.</title>
        <authorList>
            <person name="Stein L.D."/>
            <person name="Bao Z."/>
            <person name="Blasiar D."/>
            <person name="Blumenthal T."/>
            <person name="Brent M.R."/>
            <person name="Chen N."/>
            <person name="Chinwalla A."/>
            <person name="Clarke L."/>
            <person name="Clee C."/>
            <person name="Coghlan A."/>
            <person name="Coulson A."/>
            <person name="D'Eustachio P."/>
            <person name="Fitch D.H.A."/>
            <person name="Fulton L.A."/>
            <person name="Fulton R.E."/>
            <person name="Griffiths-Jones S."/>
            <person name="Harris T.W."/>
            <person name="Hillier L.W."/>
            <person name="Kamath R."/>
            <person name="Kuwabara P.E."/>
            <person name="Mardis E.R."/>
            <person name="Marra M.A."/>
            <person name="Miner T.L."/>
            <person name="Minx P."/>
            <person name="Mullikin J.C."/>
            <person name="Plumb R.W."/>
            <person name="Rogers J."/>
            <person name="Schein J.E."/>
            <person name="Sohrmann M."/>
            <person name="Spieth J."/>
            <person name="Stajich J.E."/>
            <person name="Wei C."/>
            <person name="Willey D."/>
            <person name="Wilson R.K."/>
            <person name="Durbin R.M."/>
            <person name="Waterston R.H."/>
        </authorList>
    </citation>
    <scope>NUCLEOTIDE SEQUENCE [LARGE SCALE GENOMIC DNA]</scope>
    <source>
        <strain>AF16</strain>
    </source>
</reference>
<protein>
    <recommendedName>
        <fullName evidence="1">Lon protease homolog 2, peroxisomal</fullName>
        <ecNumber evidence="1">3.4.21.53</ecNumber>
    </recommendedName>
</protein>
<accession>A8Y3E2</accession>
<name>LONP2_CAEBR</name>
<evidence type="ECO:0000255" key="1">
    <source>
        <dbReference type="HAMAP-Rule" id="MF_03121"/>
    </source>
</evidence>
<evidence type="ECO:0000255" key="2">
    <source>
        <dbReference type="PROSITE-ProRule" id="PRU01122"/>
    </source>
</evidence>
<evidence type="ECO:0000255" key="3">
    <source>
        <dbReference type="PROSITE-ProRule" id="PRU01123"/>
    </source>
</evidence>
<evidence type="ECO:0000312" key="4">
    <source>
        <dbReference type="WormBase" id="CBG23035"/>
    </source>
</evidence>
<feature type="chain" id="PRO_0000395784" description="Lon protease homolog 2, peroxisomal">
    <location>
        <begin position="1"/>
        <end position="773"/>
    </location>
</feature>
<feature type="domain" description="Lon N-terminal" evidence="3">
    <location>
        <begin position="9"/>
        <end position="198"/>
    </location>
</feature>
<feature type="domain" description="Lon proteolytic" evidence="2">
    <location>
        <begin position="587"/>
        <end position="766"/>
    </location>
</feature>
<feature type="short sequence motif" description="Microbody targeting signal" evidence="1">
    <location>
        <begin position="771"/>
        <end position="773"/>
    </location>
</feature>
<feature type="active site" evidence="1">
    <location>
        <position position="672"/>
    </location>
</feature>
<feature type="active site" evidence="1">
    <location>
        <position position="715"/>
    </location>
</feature>
<feature type="binding site" evidence="1">
    <location>
        <begin position="336"/>
        <end position="343"/>
    </location>
    <ligand>
        <name>ATP</name>
        <dbReference type="ChEBI" id="CHEBI:30616"/>
    </ligand>
</feature>
<comment type="function">
    <text evidence="1">ATP-dependent serine protease that mediates the selective degradation of misfolded and unassembled polypeptides in the peroxisomal matrix. Necessary for type 2 peroxisome targeting signal (PTS2)-containing protein processing and facilitates peroxisome matrix protein import.</text>
</comment>
<comment type="catalytic activity">
    <reaction evidence="1">
        <text>Hydrolysis of proteins in presence of ATP.</text>
        <dbReference type="EC" id="3.4.21.53"/>
    </reaction>
</comment>
<comment type="subcellular location">
    <subcellularLocation>
        <location evidence="1">Peroxisome matrix</location>
    </subcellularLocation>
</comment>
<comment type="similarity">
    <text evidence="1">Belongs to the peptidase S16 family.</text>
</comment>
<gene>
    <name evidence="4" type="primary">lonp-2</name>
    <name evidence="4" type="ORF">CBG23035</name>
</gene>
<keyword id="KW-0067">ATP-binding</keyword>
<keyword id="KW-0378">Hydrolase</keyword>
<keyword id="KW-0547">Nucleotide-binding</keyword>
<keyword id="KW-0576">Peroxisome</keyword>
<keyword id="KW-0645">Protease</keyword>
<keyword id="KW-1185">Reference proteome</keyword>
<keyword id="KW-0720">Serine protease</keyword>